<feature type="chain" id="PRO_0000070730" description="Chaperone protein DnaJ">
    <location>
        <begin position="1"/>
        <end position="381"/>
    </location>
</feature>
<feature type="domain" description="J" evidence="1">
    <location>
        <begin position="4"/>
        <end position="69"/>
    </location>
</feature>
<feature type="repeat" description="CXXCXGXG motif">
    <location>
        <begin position="148"/>
        <end position="155"/>
    </location>
</feature>
<feature type="repeat" description="CXXCXGXG motif">
    <location>
        <begin position="165"/>
        <end position="172"/>
    </location>
</feature>
<feature type="repeat" description="CXXCXGXG motif">
    <location>
        <begin position="187"/>
        <end position="194"/>
    </location>
</feature>
<feature type="repeat" description="CXXCXGXG motif">
    <location>
        <begin position="201"/>
        <end position="208"/>
    </location>
</feature>
<feature type="zinc finger region" description="CR-type" evidence="1">
    <location>
        <begin position="135"/>
        <end position="213"/>
    </location>
</feature>
<feature type="binding site" evidence="1">
    <location>
        <position position="148"/>
    </location>
    <ligand>
        <name>Zn(2+)</name>
        <dbReference type="ChEBI" id="CHEBI:29105"/>
        <label>1</label>
    </ligand>
</feature>
<feature type="binding site" evidence="1">
    <location>
        <position position="151"/>
    </location>
    <ligand>
        <name>Zn(2+)</name>
        <dbReference type="ChEBI" id="CHEBI:29105"/>
        <label>1</label>
    </ligand>
</feature>
<feature type="binding site" evidence="1">
    <location>
        <position position="165"/>
    </location>
    <ligand>
        <name>Zn(2+)</name>
        <dbReference type="ChEBI" id="CHEBI:29105"/>
        <label>2</label>
    </ligand>
</feature>
<feature type="binding site" evidence="1">
    <location>
        <position position="168"/>
    </location>
    <ligand>
        <name>Zn(2+)</name>
        <dbReference type="ChEBI" id="CHEBI:29105"/>
        <label>2</label>
    </ligand>
</feature>
<feature type="binding site" evidence="1">
    <location>
        <position position="187"/>
    </location>
    <ligand>
        <name>Zn(2+)</name>
        <dbReference type="ChEBI" id="CHEBI:29105"/>
        <label>2</label>
    </ligand>
</feature>
<feature type="binding site" evidence="1">
    <location>
        <position position="190"/>
    </location>
    <ligand>
        <name>Zn(2+)</name>
        <dbReference type="ChEBI" id="CHEBI:29105"/>
        <label>2</label>
    </ligand>
</feature>
<feature type="binding site" evidence="1">
    <location>
        <position position="201"/>
    </location>
    <ligand>
        <name>Zn(2+)</name>
        <dbReference type="ChEBI" id="CHEBI:29105"/>
        <label>1</label>
    </ligand>
</feature>
<feature type="binding site" evidence="1">
    <location>
        <position position="204"/>
    </location>
    <ligand>
        <name>Zn(2+)</name>
        <dbReference type="ChEBI" id="CHEBI:29105"/>
        <label>1</label>
    </ligand>
</feature>
<gene>
    <name evidence="1" type="primary">dnaJ</name>
    <name type="ordered locus">BH00660</name>
</gene>
<protein>
    <recommendedName>
        <fullName evidence="1">Chaperone protein DnaJ</fullName>
    </recommendedName>
</protein>
<name>DNAJ_BARHE</name>
<dbReference type="EMBL" id="BX897699">
    <property type="protein sequence ID" value="CAF26882.1"/>
    <property type="molecule type" value="Genomic_DNA"/>
</dbReference>
<dbReference type="RefSeq" id="WP_011180029.1">
    <property type="nucleotide sequence ID" value="NZ_LRIJ02000001.1"/>
</dbReference>
<dbReference type="SMR" id="Q6G553"/>
<dbReference type="PaxDb" id="283166-BH00660"/>
<dbReference type="EnsemblBacteria" id="CAF26882">
    <property type="protein sequence ID" value="CAF26882"/>
    <property type="gene ID" value="BH00660"/>
</dbReference>
<dbReference type="GeneID" id="92986353"/>
<dbReference type="KEGG" id="bhe:BH00660"/>
<dbReference type="eggNOG" id="COG0484">
    <property type="taxonomic scope" value="Bacteria"/>
</dbReference>
<dbReference type="OrthoDB" id="9779889at2"/>
<dbReference type="Proteomes" id="UP000000421">
    <property type="component" value="Chromosome"/>
</dbReference>
<dbReference type="GO" id="GO:0005737">
    <property type="term" value="C:cytoplasm"/>
    <property type="evidence" value="ECO:0007669"/>
    <property type="project" value="UniProtKB-SubCell"/>
</dbReference>
<dbReference type="GO" id="GO:0005524">
    <property type="term" value="F:ATP binding"/>
    <property type="evidence" value="ECO:0007669"/>
    <property type="project" value="InterPro"/>
</dbReference>
<dbReference type="GO" id="GO:0031072">
    <property type="term" value="F:heat shock protein binding"/>
    <property type="evidence" value="ECO:0007669"/>
    <property type="project" value="InterPro"/>
</dbReference>
<dbReference type="GO" id="GO:0051082">
    <property type="term" value="F:unfolded protein binding"/>
    <property type="evidence" value="ECO:0007669"/>
    <property type="project" value="UniProtKB-UniRule"/>
</dbReference>
<dbReference type="GO" id="GO:0008270">
    <property type="term" value="F:zinc ion binding"/>
    <property type="evidence" value="ECO:0007669"/>
    <property type="project" value="UniProtKB-UniRule"/>
</dbReference>
<dbReference type="GO" id="GO:0051085">
    <property type="term" value="P:chaperone cofactor-dependent protein refolding"/>
    <property type="evidence" value="ECO:0007669"/>
    <property type="project" value="TreeGrafter"/>
</dbReference>
<dbReference type="GO" id="GO:0006260">
    <property type="term" value="P:DNA replication"/>
    <property type="evidence" value="ECO:0007669"/>
    <property type="project" value="UniProtKB-KW"/>
</dbReference>
<dbReference type="GO" id="GO:0042026">
    <property type="term" value="P:protein refolding"/>
    <property type="evidence" value="ECO:0007669"/>
    <property type="project" value="TreeGrafter"/>
</dbReference>
<dbReference type="GO" id="GO:0009408">
    <property type="term" value="P:response to heat"/>
    <property type="evidence" value="ECO:0007669"/>
    <property type="project" value="InterPro"/>
</dbReference>
<dbReference type="CDD" id="cd06257">
    <property type="entry name" value="DnaJ"/>
    <property type="match status" value="1"/>
</dbReference>
<dbReference type="CDD" id="cd10747">
    <property type="entry name" value="DnaJ_C"/>
    <property type="match status" value="1"/>
</dbReference>
<dbReference type="CDD" id="cd10719">
    <property type="entry name" value="DnaJ_zf"/>
    <property type="match status" value="1"/>
</dbReference>
<dbReference type="FunFam" id="1.10.287.110:FF:000034">
    <property type="entry name" value="Chaperone protein DnaJ"/>
    <property type="match status" value="1"/>
</dbReference>
<dbReference type="FunFam" id="2.10.230.10:FF:000002">
    <property type="entry name" value="Molecular chaperone DnaJ"/>
    <property type="match status" value="1"/>
</dbReference>
<dbReference type="FunFam" id="2.60.260.20:FF:000004">
    <property type="entry name" value="Molecular chaperone DnaJ"/>
    <property type="match status" value="1"/>
</dbReference>
<dbReference type="Gene3D" id="1.10.287.110">
    <property type="entry name" value="DnaJ domain"/>
    <property type="match status" value="1"/>
</dbReference>
<dbReference type="Gene3D" id="2.10.230.10">
    <property type="entry name" value="Heat shock protein DnaJ, cysteine-rich domain"/>
    <property type="match status" value="1"/>
</dbReference>
<dbReference type="Gene3D" id="2.60.260.20">
    <property type="entry name" value="Urease metallochaperone UreE, N-terminal domain"/>
    <property type="match status" value="2"/>
</dbReference>
<dbReference type="HAMAP" id="MF_01152">
    <property type="entry name" value="DnaJ"/>
    <property type="match status" value="1"/>
</dbReference>
<dbReference type="InterPro" id="IPR012724">
    <property type="entry name" value="DnaJ"/>
</dbReference>
<dbReference type="InterPro" id="IPR002939">
    <property type="entry name" value="DnaJ_C"/>
</dbReference>
<dbReference type="InterPro" id="IPR001623">
    <property type="entry name" value="DnaJ_domain"/>
</dbReference>
<dbReference type="InterPro" id="IPR018253">
    <property type="entry name" value="DnaJ_domain_CS"/>
</dbReference>
<dbReference type="InterPro" id="IPR008971">
    <property type="entry name" value="HSP40/DnaJ_pept-bd"/>
</dbReference>
<dbReference type="InterPro" id="IPR001305">
    <property type="entry name" value="HSP_DnaJ_Cys-rich_dom"/>
</dbReference>
<dbReference type="InterPro" id="IPR036410">
    <property type="entry name" value="HSP_DnaJ_Cys-rich_dom_sf"/>
</dbReference>
<dbReference type="InterPro" id="IPR036869">
    <property type="entry name" value="J_dom_sf"/>
</dbReference>
<dbReference type="NCBIfam" id="TIGR02349">
    <property type="entry name" value="DnaJ_bact"/>
    <property type="match status" value="1"/>
</dbReference>
<dbReference type="NCBIfam" id="NF008035">
    <property type="entry name" value="PRK10767.1"/>
    <property type="match status" value="1"/>
</dbReference>
<dbReference type="PANTHER" id="PTHR43096:SF48">
    <property type="entry name" value="CHAPERONE PROTEIN DNAJ"/>
    <property type="match status" value="1"/>
</dbReference>
<dbReference type="PANTHER" id="PTHR43096">
    <property type="entry name" value="DNAJ HOMOLOG 1, MITOCHONDRIAL-RELATED"/>
    <property type="match status" value="1"/>
</dbReference>
<dbReference type="Pfam" id="PF00226">
    <property type="entry name" value="DnaJ"/>
    <property type="match status" value="1"/>
</dbReference>
<dbReference type="Pfam" id="PF01556">
    <property type="entry name" value="DnaJ_C"/>
    <property type="match status" value="1"/>
</dbReference>
<dbReference type="Pfam" id="PF00684">
    <property type="entry name" value="DnaJ_CXXCXGXG"/>
    <property type="match status" value="1"/>
</dbReference>
<dbReference type="PRINTS" id="PR00625">
    <property type="entry name" value="JDOMAIN"/>
</dbReference>
<dbReference type="SMART" id="SM00271">
    <property type="entry name" value="DnaJ"/>
    <property type="match status" value="1"/>
</dbReference>
<dbReference type="SUPFAM" id="SSF46565">
    <property type="entry name" value="Chaperone J-domain"/>
    <property type="match status" value="1"/>
</dbReference>
<dbReference type="SUPFAM" id="SSF57938">
    <property type="entry name" value="DnaJ/Hsp40 cysteine-rich domain"/>
    <property type="match status" value="1"/>
</dbReference>
<dbReference type="SUPFAM" id="SSF49493">
    <property type="entry name" value="HSP40/DnaJ peptide-binding domain"/>
    <property type="match status" value="2"/>
</dbReference>
<dbReference type="PROSITE" id="PS00636">
    <property type="entry name" value="DNAJ_1"/>
    <property type="match status" value="1"/>
</dbReference>
<dbReference type="PROSITE" id="PS50076">
    <property type="entry name" value="DNAJ_2"/>
    <property type="match status" value="1"/>
</dbReference>
<dbReference type="PROSITE" id="PS51188">
    <property type="entry name" value="ZF_CR"/>
    <property type="match status" value="1"/>
</dbReference>
<accession>Q6G553</accession>
<comment type="function">
    <text evidence="1">Participates actively in the response to hyperosmotic and heat shock by preventing the aggregation of stress-denatured proteins and by disaggregating proteins, also in an autonomous, DnaK-independent fashion. Unfolded proteins bind initially to DnaJ; upon interaction with the DnaJ-bound protein, DnaK hydrolyzes its bound ATP, resulting in the formation of a stable complex. GrpE releases ADP from DnaK; ATP binding to DnaK triggers the release of the substrate protein, thus completing the reaction cycle. Several rounds of ATP-dependent interactions between DnaJ, DnaK and GrpE are required for fully efficient folding. Also involved, together with DnaK and GrpE, in the DNA replication of plasmids through activation of initiation proteins.</text>
</comment>
<comment type="cofactor">
    <cofactor evidence="1">
        <name>Zn(2+)</name>
        <dbReference type="ChEBI" id="CHEBI:29105"/>
    </cofactor>
    <text evidence="1">Binds 2 Zn(2+) ions per monomer.</text>
</comment>
<comment type="subunit">
    <text evidence="1">Homodimer.</text>
</comment>
<comment type="subcellular location">
    <subcellularLocation>
        <location evidence="1">Cytoplasm</location>
    </subcellularLocation>
</comment>
<comment type="domain">
    <text evidence="1">The J domain is necessary and sufficient to stimulate DnaK ATPase activity. Zinc center 1 plays an important role in the autonomous, DnaK-independent chaperone activity of DnaJ. Zinc center 2 is essential for interaction with DnaK and for DnaJ activity.</text>
</comment>
<comment type="similarity">
    <text evidence="1">Belongs to the DnaJ family.</text>
</comment>
<organism>
    <name type="scientific">Bartonella henselae (strain ATCC 49882 / DSM 28221 / CCUG 30454 / Houston 1)</name>
    <name type="common">Rochalimaea henselae</name>
    <dbReference type="NCBI Taxonomy" id="283166"/>
    <lineage>
        <taxon>Bacteria</taxon>
        <taxon>Pseudomonadati</taxon>
        <taxon>Pseudomonadota</taxon>
        <taxon>Alphaproteobacteria</taxon>
        <taxon>Hyphomicrobiales</taxon>
        <taxon>Bartonellaceae</taxon>
        <taxon>Bartonella</taxon>
    </lineage>
</organism>
<reference key="1">
    <citation type="journal article" date="2004" name="Proc. Natl. Acad. Sci. U.S.A.">
        <title>The louse-borne human pathogen Bartonella quintana is a genomic derivative of the zoonotic agent Bartonella henselae.</title>
        <authorList>
            <person name="Alsmark U.C.M."/>
            <person name="Frank A.C."/>
            <person name="Karlberg E.O."/>
            <person name="Legault B.-A."/>
            <person name="Ardell D.H."/>
            <person name="Canbaeck B."/>
            <person name="Eriksson A.-S."/>
            <person name="Naeslund A.K."/>
            <person name="Handley S.A."/>
            <person name="Huvet M."/>
            <person name="La Scola B."/>
            <person name="Holmberg M."/>
            <person name="Andersson S.G.E."/>
        </authorList>
    </citation>
    <scope>NUCLEOTIDE SEQUENCE [LARGE SCALE GENOMIC DNA]</scope>
    <source>
        <strain>ATCC 49882 / DSM 28221 / CCUG 30454 / Houston 1</strain>
    </source>
</reference>
<evidence type="ECO:0000255" key="1">
    <source>
        <dbReference type="HAMAP-Rule" id="MF_01152"/>
    </source>
</evidence>
<proteinExistence type="inferred from homology"/>
<keyword id="KW-0143">Chaperone</keyword>
<keyword id="KW-0963">Cytoplasm</keyword>
<keyword id="KW-0235">DNA replication</keyword>
<keyword id="KW-0479">Metal-binding</keyword>
<keyword id="KW-0677">Repeat</keyword>
<keyword id="KW-0346">Stress response</keyword>
<keyword id="KW-0862">Zinc</keyword>
<keyword id="KW-0863">Zinc-finger</keyword>
<sequence length="381" mass="42249">MKVDYYEILGVTRECDDKKLKSAFRKLAMQYHPDRNAGDKEAERKFKEIGEAYEVLKDPQKRAAYDRFGHAAFENNNNGGGSPFSGFSAGGFADIFEDFFGEIMGGGHRKRSDGRERGADLSYNMEVTLEEAFSGKTAQINIPSSVVCDACEGSGAKKGSKPQTCGTCHGAGRVRAAQGFFSIERTCPVCHGRGETIKDPCPKCQGTRRVEKNRSLSVNIPAGIEDSTRIRLSGEGDAGIRGGPSGDLYIFLSVKPHEFFQREGADLHCRVPISMVTAALGGEFEVSDLDGIKARVKIPEGTQNGRQFRLKGKGMPMLRRQQVRGDLYIHITIETPQKLTQEQRELLQKFEKLSNHENSPQSHGFFSRMKEFFENISGKNE</sequence>